<accession>P31232</accession>
<evidence type="ECO:0000250" key="1">
    <source>
        <dbReference type="UniProtKB" id="P37804"/>
    </source>
</evidence>
<evidence type="ECO:0000250" key="2">
    <source>
        <dbReference type="UniProtKB" id="Q01995"/>
    </source>
</evidence>
<evidence type="ECO:0000255" key="3"/>
<evidence type="ECO:0000255" key="4">
    <source>
        <dbReference type="PROSITE-ProRule" id="PRU00044"/>
    </source>
</evidence>
<evidence type="ECO:0000305" key="5"/>
<evidence type="ECO:0007744" key="6">
    <source>
    </source>
</evidence>
<organism>
    <name type="scientific">Rattus norvegicus</name>
    <name type="common">Rat</name>
    <dbReference type="NCBI Taxonomy" id="10116"/>
    <lineage>
        <taxon>Eukaryota</taxon>
        <taxon>Metazoa</taxon>
        <taxon>Chordata</taxon>
        <taxon>Craniata</taxon>
        <taxon>Vertebrata</taxon>
        <taxon>Euteleostomi</taxon>
        <taxon>Mammalia</taxon>
        <taxon>Eutheria</taxon>
        <taxon>Euarchontoglires</taxon>
        <taxon>Glires</taxon>
        <taxon>Rodentia</taxon>
        <taxon>Myomorpha</taxon>
        <taxon>Muroidea</taxon>
        <taxon>Muridae</taxon>
        <taxon>Murinae</taxon>
        <taxon>Rattus</taxon>
    </lineage>
</organism>
<name>TAGL_RAT</name>
<feature type="initiator methionine" description="Removed" evidence="3">
    <location>
        <position position="1"/>
    </location>
</feature>
<feature type="chain" id="PRO_0000204783" description="Transgelin">
    <location>
        <begin position="2"/>
        <end position="201"/>
    </location>
</feature>
<feature type="domain" description="Calponin-homology (CH)" evidence="4">
    <location>
        <begin position="24"/>
        <end position="137"/>
    </location>
</feature>
<feature type="repeat" description="Calponin-like">
    <location>
        <begin position="175"/>
        <end position="200"/>
    </location>
</feature>
<feature type="region of interest" description="Could be involved in actin-binding">
    <location>
        <begin position="154"/>
        <end position="161"/>
    </location>
</feature>
<feature type="modified residue" description="N-acetylalanine" evidence="2 3">
    <location>
        <position position="2"/>
    </location>
</feature>
<feature type="modified residue" description="Phosphoserine" evidence="2">
    <location>
        <position position="166"/>
    </location>
</feature>
<feature type="modified residue" description="N6-acetyllysine" evidence="1">
    <location>
        <position position="172"/>
    </location>
</feature>
<feature type="modified residue" description="Phosphoserine" evidence="6">
    <location>
        <position position="181"/>
    </location>
</feature>
<feature type="modified residue" description="Omega-N-methylarginine" evidence="2">
    <location>
        <position position="183"/>
    </location>
</feature>
<proteinExistence type="evidence at protein level"/>
<dbReference type="EMBL" id="X71070">
    <property type="protein sequence ID" value="CAA50396.1"/>
    <property type="molecule type" value="mRNA"/>
</dbReference>
<dbReference type="EMBL" id="M83107">
    <property type="protein sequence ID" value="AAA40762.1"/>
    <property type="molecule type" value="mRNA"/>
</dbReference>
<dbReference type="EMBL" id="X64422">
    <property type="protein sequence ID" value="CAA45769.1"/>
    <property type="molecule type" value="mRNA"/>
</dbReference>
<dbReference type="EMBL" id="BC061770">
    <property type="protein sequence ID" value="AAH61770.1"/>
    <property type="molecule type" value="mRNA"/>
</dbReference>
<dbReference type="PIR" id="JN0774">
    <property type="entry name" value="JN0774"/>
</dbReference>
<dbReference type="RefSeq" id="NP_113737.1">
    <property type="nucleotide sequence ID" value="NM_031549.2"/>
</dbReference>
<dbReference type="SMR" id="P31232"/>
<dbReference type="BioGRID" id="247194">
    <property type="interactions" value="3"/>
</dbReference>
<dbReference type="FunCoup" id="P31232">
    <property type="interactions" value="345"/>
</dbReference>
<dbReference type="IntAct" id="P31232">
    <property type="interactions" value="6"/>
</dbReference>
<dbReference type="STRING" id="10116.ENSRNOP00000069919"/>
<dbReference type="iPTMnet" id="P31232"/>
<dbReference type="PhosphoSitePlus" id="P31232"/>
<dbReference type="PaxDb" id="10116-ENSRNOP00000024030"/>
<dbReference type="GeneID" id="25123"/>
<dbReference type="KEGG" id="rno:25123"/>
<dbReference type="UCSC" id="RGD:3723">
    <property type="organism name" value="rat"/>
</dbReference>
<dbReference type="AGR" id="RGD:3723"/>
<dbReference type="CTD" id="6876"/>
<dbReference type="RGD" id="3723">
    <property type="gene designation" value="Tagln"/>
</dbReference>
<dbReference type="VEuPathDB" id="HostDB:ENSRNOG00000017628"/>
<dbReference type="eggNOG" id="KOG2046">
    <property type="taxonomic scope" value="Eukaryota"/>
</dbReference>
<dbReference type="HOGENOM" id="CLU_055232_1_0_1"/>
<dbReference type="InParanoid" id="P31232"/>
<dbReference type="OrthoDB" id="11923at9989"/>
<dbReference type="PhylomeDB" id="P31232"/>
<dbReference type="TreeFam" id="TF313921"/>
<dbReference type="PRO" id="PR:P31232"/>
<dbReference type="Proteomes" id="UP000002494">
    <property type="component" value="Chromosome 8"/>
</dbReference>
<dbReference type="Bgee" id="ENSRNOG00000017628">
    <property type="expression patterns" value="Expressed in colon and 19 other cell types or tissues"/>
</dbReference>
<dbReference type="ExpressionAtlas" id="P31232">
    <property type="expression patterns" value="baseline and differential"/>
</dbReference>
<dbReference type="GO" id="GO:0005737">
    <property type="term" value="C:cytoplasm"/>
    <property type="evidence" value="ECO:0007669"/>
    <property type="project" value="UniProtKB-SubCell"/>
</dbReference>
<dbReference type="GO" id="GO:0051015">
    <property type="term" value="F:actin filament binding"/>
    <property type="evidence" value="ECO:0000304"/>
    <property type="project" value="RGD"/>
</dbReference>
<dbReference type="GO" id="GO:0030674">
    <property type="term" value="F:protein-macromolecule adaptor activity"/>
    <property type="evidence" value="ECO:0000304"/>
    <property type="project" value="RGD"/>
</dbReference>
<dbReference type="GO" id="GO:0036120">
    <property type="term" value="P:cellular response to platelet-derived growth factor stimulus"/>
    <property type="evidence" value="ECO:0000270"/>
    <property type="project" value="RGD"/>
</dbReference>
<dbReference type="GO" id="GO:0030855">
    <property type="term" value="P:epithelial cell differentiation"/>
    <property type="evidence" value="ECO:0000266"/>
    <property type="project" value="RGD"/>
</dbReference>
<dbReference type="CDD" id="cd21279">
    <property type="entry name" value="CH_TAGLN"/>
    <property type="match status" value="1"/>
</dbReference>
<dbReference type="FunFam" id="1.10.418.10:FF:000039">
    <property type="entry name" value="Transgelin"/>
    <property type="match status" value="1"/>
</dbReference>
<dbReference type="Gene3D" id="1.10.418.10">
    <property type="entry name" value="Calponin-like domain"/>
    <property type="match status" value="1"/>
</dbReference>
<dbReference type="InterPro" id="IPR050606">
    <property type="entry name" value="Calponin-like"/>
</dbReference>
<dbReference type="InterPro" id="IPR000557">
    <property type="entry name" value="Calponin_repeat"/>
</dbReference>
<dbReference type="InterPro" id="IPR001715">
    <property type="entry name" value="CH_dom"/>
</dbReference>
<dbReference type="InterPro" id="IPR036872">
    <property type="entry name" value="CH_dom_sf"/>
</dbReference>
<dbReference type="InterPro" id="IPR003096">
    <property type="entry name" value="SM22_calponin"/>
</dbReference>
<dbReference type="PANTHER" id="PTHR47385">
    <property type="entry name" value="CALPONIN"/>
    <property type="match status" value="1"/>
</dbReference>
<dbReference type="PANTHER" id="PTHR47385:SF16">
    <property type="entry name" value="TRANSGELIN"/>
    <property type="match status" value="1"/>
</dbReference>
<dbReference type="Pfam" id="PF00402">
    <property type="entry name" value="Calponin"/>
    <property type="match status" value="1"/>
</dbReference>
<dbReference type="Pfam" id="PF00307">
    <property type="entry name" value="CH"/>
    <property type="match status" value="1"/>
</dbReference>
<dbReference type="PRINTS" id="PR00888">
    <property type="entry name" value="SM22CALPONIN"/>
</dbReference>
<dbReference type="PRINTS" id="PR00890">
    <property type="entry name" value="TRANSGELIN"/>
</dbReference>
<dbReference type="SMART" id="SM00033">
    <property type="entry name" value="CH"/>
    <property type="match status" value="1"/>
</dbReference>
<dbReference type="SUPFAM" id="SSF47576">
    <property type="entry name" value="Calponin-homology domain, CH-domain"/>
    <property type="match status" value="1"/>
</dbReference>
<dbReference type="PROSITE" id="PS01052">
    <property type="entry name" value="CALPONIN_1"/>
    <property type="match status" value="1"/>
</dbReference>
<dbReference type="PROSITE" id="PS51122">
    <property type="entry name" value="CALPONIN_2"/>
    <property type="match status" value="1"/>
</dbReference>
<dbReference type="PROSITE" id="PS50021">
    <property type="entry name" value="CH"/>
    <property type="match status" value="1"/>
</dbReference>
<keyword id="KW-0007">Acetylation</keyword>
<keyword id="KW-0963">Cytoplasm</keyword>
<keyword id="KW-0903">Direct protein sequencing</keyword>
<keyword id="KW-0488">Methylation</keyword>
<keyword id="KW-0514">Muscle protein</keyword>
<keyword id="KW-0597">Phosphoprotein</keyword>
<keyword id="KW-1185">Reference proteome</keyword>
<protein>
    <recommendedName>
        <fullName>Transgelin</fullName>
    </recommendedName>
    <alternativeName>
        <fullName>Smooth muscle protein 22-alpha</fullName>
        <shortName>SM22-alpha</shortName>
    </alternativeName>
</protein>
<comment type="function">
    <text>Actin cross-linking/gelling protein.</text>
</comment>
<comment type="subcellular location">
    <subcellularLocation>
        <location evidence="5">Cytoplasm</location>
    </subcellularLocation>
</comment>
<comment type="tissue specificity">
    <text>Smooth muscle and mesenchymal cells but not in skeletal muscle or lymphocytes.</text>
</comment>
<comment type="similarity">
    <text evidence="5">Belongs to the calponin family.</text>
</comment>
<gene>
    <name type="primary">Tagln</name>
    <name type="synonym">Sm22</name>
</gene>
<reference key="1">
    <citation type="journal article" date="1993" name="Circ. Res.">
        <title>Isolation of gene markers of differentiated and proliferating vascular smooth muscle cells.</title>
        <authorList>
            <person name="Shanahan C.M."/>
            <person name="Weissberg P.L."/>
            <person name="Metcalfe J.C."/>
        </authorList>
    </citation>
    <scope>NUCLEOTIDE SEQUENCE [MRNA]</scope>
    <source>
        <strain>Wistar</strain>
        <tissue>Aortic smooth muscle</tissue>
    </source>
</reference>
<reference key="2">
    <citation type="journal article" date="1993" name="Gene">
        <title>cDNA cloning and mRNA expression of calponin and SM22 in rat aorta smooth muscle cells.</title>
        <authorList>
            <person name="Nishida W."/>
            <person name="Kitami Y."/>
            <person name="Hiwada K."/>
        </authorList>
    </citation>
    <scope>NUCLEOTIDE SEQUENCE [MRNA]</scope>
    <source>
        <strain>Sprague-Dawley</strain>
        <tissue>Aortic smooth muscle</tissue>
    </source>
</reference>
<reference key="3">
    <citation type="journal article" date="1994" name="Cell Motil. Cytoskeleton">
        <title>Cloning and sequencing of cDNAs encoding the actin cross-linking protein transgelin defines a new family of actin-associated proteins.</title>
        <authorList>
            <person name="Prinjha R."/>
            <person name="Shapland C."/>
            <person name="Hsuan J."/>
            <person name="Totty N."/>
            <person name="Mason I."/>
            <person name="Lawson D."/>
        </authorList>
    </citation>
    <scope>NUCLEOTIDE SEQUENCE [MRNA]</scope>
    <source>
        <strain>Sprague-Dawley</strain>
        <tissue>Aorta</tissue>
    </source>
</reference>
<reference key="4">
    <citation type="journal article" date="1994" name="Cell Motil. Cytoskeleton">
        <authorList>
            <person name="Prinjha R."/>
            <person name="Shapland C."/>
            <person name="Hsuan J."/>
            <person name="Totty N."/>
            <person name="Mason I."/>
            <person name="Lawson D."/>
        </authorList>
    </citation>
    <scope>ERRATUM OF PUBMED:7954852</scope>
</reference>
<reference key="5">
    <citation type="journal article" date="2004" name="Genome Res.">
        <title>The status, quality, and expansion of the NIH full-length cDNA project: the Mammalian Gene Collection (MGC).</title>
        <authorList>
            <consortium name="The MGC Project Team"/>
        </authorList>
    </citation>
    <scope>NUCLEOTIDE SEQUENCE [LARGE SCALE MRNA]</scope>
    <source>
        <tissue>Prostate</tissue>
    </source>
</reference>
<reference key="6">
    <citation type="submission" date="2007-07" db="UniProtKB">
        <authorList>
            <person name="Lubec G."/>
            <person name="Kang S.U."/>
        </authorList>
    </citation>
    <scope>PROTEIN SEQUENCE OF 162-172</scope>
    <scope>IDENTIFICATION BY MASS SPECTROMETRY</scope>
    <source>
        <strain>Sprague-Dawley</strain>
        <tissue>Brain</tissue>
    </source>
</reference>
<reference key="7">
    <citation type="journal article" date="2012" name="Nat. Commun.">
        <title>Quantitative maps of protein phosphorylation sites across 14 different rat organs and tissues.</title>
        <authorList>
            <person name="Lundby A."/>
            <person name="Secher A."/>
            <person name="Lage K."/>
            <person name="Nordsborg N.B."/>
            <person name="Dmytriyev A."/>
            <person name="Lundby C."/>
            <person name="Olsen J.V."/>
        </authorList>
    </citation>
    <scope>PHOSPHORYLATION [LARGE SCALE ANALYSIS] AT SER-181</scope>
    <scope>IDENTIFICATION BY MASS SPECTROMETRY [LARGE SCALE ANALYSIS]</scope>
</reference>
<sequence>MANKGPSYGMSREVQSKIEKKYDEELEERLVEWIVMQCGPDVGRPDRGRLGFQVWLKNGVILSKLVNSLYPEGSKPVKVPENPPSMVFKQMEQVAQFLKAAEDYGVTKTDMFQTVDLFEGKDMAAVQRTVMALGSLAVTKNDGHYRGDPNWFMKKAQEHKREFTDSQLQEGKHVIGLQMGSNRGASQAGMTGYGRPRQIIS</sequence>